<feature type="chain" id="PRO_0000346626" description="Nucleoid occlusion protein">
    <location>
        <begin position="1"/>
        <end position="290"/>
    </location>
</feature>
<feature type="DNA-binding region" description="H-T-H motif" evidence="1">
    <location>
        <begin position="153"/>
        <end position="172"/>
    </location>
</feature>
<reference key="1">
    <citation type="journal article" date="2007" name="J. Bacteriol.">
        <title>The complete genome sequence of Bacillus thuringiensis Al Hakam.</title>
        <authorList>
            <person name="Challacombe J.F."/>
            <person name="Altherr M.R."/>
            <person name="Xie G."/>
            <person name="Bhotika S.S."/>
            <person name="Brown N."/>
            <person name="Bruce D."/>
            <person name="Campbell C.S."/>
            <person name="Campbell M.L."/>
            <person name="Chen J."/>
            <person name="Chertkov O."/>
            <person name="Cleland C."/>
            <person name="Dimitrijevic M."/>
            <person name="Doggett N.A."/>
            <person name="Fawcett J.J."/>
            <person name="Glavina T."/>
            <person name="Goodwin L.A."/>
            <person name="Green L.D."/>
            <person name="Han C.S."/>
            <person name="Hill K.K."/>
            <person name="Hitchcock P."/>
            <person name="Jackson P.J."/>
            <person name="Keim P."/>
            <person name="Kewalramani A.R."/>
            <person name="Longmire J."/>
            <person name="Lucas S."/>
            <person name="Malfatti S."/>
            <person name="Martinez D."/>
            <person name="McMurry K."/>
            <person name="Meincke L.J."/>
            <person name="Misra M."/>
            <person name="Moseman B.L."/>
            <person name="Mundt M."/>
            <person name="Munk A.C."/>
            <person name="Okinaka R.T."/>
            <person name="Parson-Quintana B."/>
            <person name="Reilly L.P."/>
            <person name="Richardson P."/>
            <person name="Robinson D.L."/>
            <person name="Saunders E."/>
            <person name="Tapia R."/>
            <person name="Tesmer J.G."/>
            <person name="Thayer N."/>
            <person name="Thompson L.S."/>
            <person name="Tice H."/>
            <person name="Ticknor L.O."/>
            <person name="Wills P.L."/>
            <person name="Gilna P."/>
            <person name="Brettin T.S."/>
        </authorList>
    </citation>
    <scope>NUCLEOTIDE SEQUENCE [LARGE SCALE GENOMIC DNA]</scope>
    <source>
        <strain>Al Hakam</strain>
    </source>
</reference>
<comment type="function">
    <text evidence="1">Effects nucleoid occlusion by binding relatively nonspecifically to DNA and preventing the assembly of the division machinery in the vicinity of the nucleoid, especially under conditions that disturb the cell cycle. It helps to coordinate cell division and chromosome segregation by preventing the formation of the Z ring through the nucleoid, which would cause chromosome breakage.</text>
</comment>
<comment type="subcellular location">
    <subcellularLocation>
        <location evidence="1">Cytoplasm</location>
        <location evidence="1">Nucleoid</location>
    </subcellularLocation>
</comment>
<comment type="similarity">
    <text evidence="1">Belongs to the ParB family.</text>
</comment>
<gene>
    <name evidence="1" type="primary">noc</name>
    <name type="ordered locus">BALH_4988</name>
</gene>
<organism>
    <name type="scientific">Bacillus thuringiensis (strain Al Hakam)</name>
    <dbReference type="NCBI Taxonomy" id="412694"/>
    <lineage>
        <taxon>Bacteria</taxon>
        <taxon>Bacillati</taxon>
        <taxon>Bacillota</taxon>
        <taxon>Bacilli</taxon>
        <taxon>Bacillales</taxon>
        <taxon>Bacillaceae</taxon>
        <taxon>Bacillus</taxon>
        <taxon>Bacillus cereus group</taxon>
    </lineage>
</organism>
<name>NOC_BACAH</name>
<proteinExistence type="inferred from homology"/>
<keyword id="KW-0131">Cell cycle</keyword>
<keyword id="KW-0132">Cell division</keyword>
<keyword id="KW-0963">Cytoplasm</keyword>
<keyword id="KW-0238">DNA-binding</keyword>
<keyword id="KW-0717">Septation</keyword>
<dbReference type="EMBL" id="CP000485">
    <property type="protein sequence ID" value="ABK88152.1"/>
    <property type="molecule type" value="Genomic_DNA"/>
</dbReference>
<dbReference type="RefSeq" id="WP_000799028.1">
    <property type="nucleotide sequence ID" value="NC_008600.1"/>
</dbReference>
<dbReference type="SMR" id="A0RLQ9"/>
<dbReference type="GeneID" id="45025309"/>
<dbReference type="KEGG" id="btl:BALH_4988"/>
<dbReference type="HOGENOM" id="CLU_023853_0_1_9"/>
<dbReference type="GO" id="GO:0005694">
    <property type="term" value="C:chromosome"/>
    <property type="evidence" value="ECO:0007669"/>
    <property type="project" value="TreeGrafter"/>
</dbReference>
<dbReference type="GO" id="GO:0005737">
    <property type="term" value="C:cytoplasm"/>
    <property type="evidence" value="ECO:0007669"/>
    <property type="project" value="UniProtKB-UniRule"/>
</dbReference>
<dbReference type="GO" id="GO:0009295">
    <property type="term" value="C:nucleoid"/>
    <property type="evidence" value="ECO:0007669"/>
    <property type="project" value="UniProtKB-SubCell"/>
</dbReference>
<dbReference type="GO" id="GO:0003677">
    <property type="term" value="F:DNA binding"/>
    <property type="evidence" value="ECO:0007669"/>
    <property type="project" value="UniProtKB-UniRule"/>
</dbReference>
<dbReference type="GO" id="GO:0007059">
    <property type="term" value="P:chromosome segregation"/>
    <property type="evidence" value="ECO:0007669"/>
    <property type="project" value="TreeGrafter"/>
</dbReference>
<dbReference type="GO" id="GO:0000917">
    <property type="term" value="P:division septum assembly"/>
    <property type="evidence" value="ECO:0007669"/>
    <property type="project" value="UniProtKB-KW"/>
</dbReference>
<dbReference type="GO" id="GO:0045881">
    <property type="term" value="P:positive regulation of sporulation resulting in formation of a cellular spore"/>
    <property type="evidence" value="ECO:0007669"/>
    <property type="project" value="TreeGrafter"/>
</dbReference>
<dbReference type="CDD" id="cd16393">
    <property type="entry name" value="SPO0J_N"/>
    <property type="match status" value="1"/>
</dbReference>
<dbReference type="FunFam" id="1.10.10.2830:FF:000001">
    <property type="entry name" value="Chromosome partitioning protein ParB"/>
    <property type="match status" value="1"/>
</dbReference>
<dbReference type="FunFam" id="3.90.1530.30:FF:000001">
    <property type="entry name" value="Chromosome partitioning protein ParB"/>
    <property type="match status" value="1"/>
</dbReference>
<dbReference type="Gene3D" id="1.10.10.2830">
    <property type="match status" value="1"/>
</dbReference>
<dbReference type="Gene3D" id="3.90.1530.30">
    <property type="match status" value="1"/>
</dbReference>
<dbReference type="HAMAP" id="MF_02015">
    <property type="entry name" value="ParB_Noc"/>
    <property type="match status" value="1"/>
</dbReference>
<dbReference type="InterPro" id="IPR050336">
    <property type="entry name" value="Chromosome_partition/occlusion"/>
</dbReference>
<dbReference type="InterPro" id="IPR041468">
    <property type="entry name" value="HTH_ParB/Spo0J"/>
</dbReference>
<dbReference type="InterPro" id="IPR023705">
    <property type="entry name" value="Nucleoid_occlusion_protein"/>
</dbReference>
<dbReference type="InterPro" id="IPR004437">
    <property type="entry name" value="ParB/RepB/Spo0J"/>
</dbReference>
<dbReference type="InterPro" id="IPR003115">
    <property type="entry name" value="ParB/Sulfiredoxin_dom"/>
</dbReference>
<dbReference type="InterPro" id="IPR036086">
    <property type="entry name" value="ParB/Sulfiredoxin_sf"/>
</dbReference>
<dbReference type="NCBIfam" id="TIGR04285">
    <property type="entry name" value="nucleoid_noc"/>
    <property type="match status" value="1"/>
</dbReference>
<dbReference type="NCBIfam" id="TIGR00180">
    <property type="entry name" value="parB_part"/>
    <property type="match status" value="1"/>
</dbReference>
<dbReference type="PANTHER" id="PTHR33375">
    <property type="entry name" value="CHROMOSOME-PARTITIONING PROTEIN PARB-RELATED"/>
    <property type="match status" value="1"/>
</dbReference>
<dbReference type="PANTHER" id="PTHR33375:SF8">
    <property type="entry name" value="NUCLEOID OCCLUSION PROTEIN"/>
    <property type="match status" value="1"/>
</dbReference>
<dbReference type="Pfam" id="PF17762">
    <property type="entry name" value="HTH_ParB"/>
    <property type="match status" value="1"/>
</dbReference>
<dbReference type="Pfam" id="PF02195">
    <property type="entry name" value="ParBc"/>
    <property type="match status" value="1"/>
</dbReference>
<dbReference type="SMART" id="SM00470">
    <property type="entry name" value="ParB"/>
    <property type="match status" value="1"/>
</dbReference>
<dbReference type="SUPFAM" id="SSF110849">
    <property type="entry name" value="ParB/Sulfiredoxin"/>
    <property type="match status" value="1"/>
</dbReference>
<evidence type="ECO:0000255" key="1">
    <source>
        <dbReference type="HAMAP-Rule" id="MF_02015"/>
    </source>
</evidence>
<sequence>MKNTFSRLFGFGDKESEFELQDESHEEIDKKVYEEIQEIPIVNITPNRYQPRTVFDDARIEELALTIRTHGLIQPIVVRQYEDDKYEIIAGERRFRAATKLGWEKVPAIIKNLNDTETASVALIENLQREELTAIEEAVAYQKLIELHNLTQEALAQRLGKGQSTIANKLRLLKLPEEIKSALLEKSITERHARALIPLKNEELQLKVLQEIVEKQLNVKQTEERITKLLEEAKPKRKAKQKAVSRDTRIAMNTIRQSLQMVADSGLNVNSEEEEFDEYYQITIQIPKKK</sequence>
<protein>
    <recommendedName>
        <fullName evidence="1">Nucleoid occlusion protein</fullName>
        <shortName evidence="1">Noc</shortName>
    </recommendedName>
</protein>
<accession>A0RLQ9</accession>